<accession>M4HY08</accession>
<proteinExistence type="evidence at protein level"/>
<reference key="1">
    <citation type="journal article" date="2013" name="Plant Physiol.">
        <title>Evolution of conifer diterpene synthases: diterpene resin acid biosynthesis in lodgepole pine and jack pine involves monofunctional and bifunctional diterpene synthases.</title>
        <authorList>
            <person name="Hall D.E."/>
            <person name="Zerbe P."/>
            <person name="Jancsik S."/>
            <person name="Quesada A.L."/>
            <person name="Dullat H."/>
            <person name="Madilao L.L."/>
            <person name="Yuen M."/>
            <person name="Bohlmann J."/>
        </authorList>
    </citation>
    <scope>NUCLEOTIDE SEQUENCE [MRNA]</scope>
    <scope>FUNCTION</scope>
    <scope>CATALYTIC ACTIVITY</scope>
    <scope>3D-STRUCTURE MODELING</scope>
</reference>
<protein>
    <recommendedName>
        <fullName evidence="3">Monofunctional pimaradiene synthase</fullName>
        <shortName evidence="3">PbmPIM1</shortName>
        <ecNumber evidence="2">4.2.3.147</ecNumber>
    </recommendedName>
</protein>
<feature type="chain" id="PRO_0000431414" description="Monofunctional pimaradiene synthase">
    <location>
        <begin position="1"/>
        <end position="868"/>
    </location>
</feature>
<feature type="binding site" evidence="1">
    <location>
        <position position="620"/>
    </location>
    <ligand>
        <name>Mg(2+)</name>
        <dbReference type="ChEBI" id="CHEBI:18420"/>
        <label>1</label>
    </ligand>
</feature>
<feature type="binding site" evidence="1">
    <location>
        <position position="620"/>
    </location>
    <ligand>
        <name>Mg(2+)</name>
        <dbReference type="ChEBI" id="CHEBI:18420"/>
        <label>2</label>
    </ligand>
</feature>
<feature type="binding site" evidence="1">
    <location>
        <position position="624"/>
    </location>
    <ligand>
        <name>Mg(2+)</name>
        <dbReference type="ChEBI" id="CHEBI:18420"/>
        <label>1</label>
    </ligand>
</feature>
<feature type="binding site" evidence="1">
    <location>
        <position position="624"/>
    </location>
    <ligand>
        <name>Mg(2+)</name>
        <dbReference type="ChEBI" id="CHEBI:18420"/>
        <label>2</label>
    </ligand>
</feature>
<feature type="binding site" evidence="1">
    <location>
        <position position="764"/>
    </location>
    <ligand>
        <name>Mg(2+)</name>
        <dbReference type="ChEBI" id="CHEBI:18420"/>
        <label>3</label>
    </ligand>
</feature>
<feature type="binding site" evidence="1">
    <location>
        <position position="768"/>
    </location>
    <ligand>
        <name>Mg(2+)</name>
        <dbReference type="ChEBI" id="CHEBI:18420"/>
        <label>3</label>
    </ligand>
</feature>
<feature type="binding site" evidence="1">
    <location>
        <position position="772"/>
    </location>
    <ligand>
        <name>Mg(2+)</name>
        <dbReference type="ChEBI" id="CHEBI:18420"/>
        <label>3</label>
    </ligand>
</feature>
<sequence length="868" mass="100159">MAMPLCSLTSYNPITTTLRGHHFLTINAYVKTQCIPCFFIKLHTRSSASKQRIIDLRSGSSNIVACVGEGATSLSSHSDIMKTGKREEIPPGVWKDDISDSIMSSHKPEADEKRVEILIAEIKSMFRGMGDGETTPSAYDTAWVAKIPALDGSDHPHFPQTLQWILQNQLQDGSWGEGTYFSAYDRLLATLACIITLTVWRTGQTQVRQGIEFFRKHAGTMEDEADNHQPIGFEFVFPAMINEAKSLCLDLPYDTPFIKQIIEKREAKLKMIPTDTLYTVPTTFLHYLEGLQEIIDCQKIIKLQSKDGSFLSSPASTAAVFMCTGNTKCLEFLNFVLIKFGNHVPCQYPLDLFERLWAVDIVERLGIDRHFKKEIKDALDYVYSHWDERGIGWARENPVAYIDVMATGIRILRLHRYNVSSDILKTFRDENGEFYRFPGQSERGVTDMLNLNRCSHVAFPGETVMEEAKLCTERYLWNALENVNPLDKWDLKENIRGEVEYALKYPWLRRLPRLETRNYIEHYGANDVWLGKMMHMMPYINDRKYLELAKLDFNNVQSIHQKELRELRRWWKSSGFAELNFLPDRVAEIFFSIASSMFEPELATCRAVYTKSTLCTVILDGFYDVHGSAEDIMLFNEAVKRWDHSLLDRMPEHIKTCFLALYNVVNEIAEEGRKRQGHDVLPYIRNLWEIQLESFTKEAEWSRAEHVPSFHEYIEAAAISSALPTLVLIGVIFTGEVLTDHILSQIDYRSKFAYLMSLTGRLANDTKTYQVERSRGEVASAIQCYMKENPELSEEEALEYIYRLMENALADFKREFLKTKDVPEYCRRLVFDNARSMQLIYMEGDGFKLSHETEIKEHVKKILFEPVA</sequence>
<organism>
    <name type="scientific">Pinus banksiana</name>
    <name type="common">Jack pine</name>
    <name type="synonym">Pinus divaricata</name>
    <dbReference type="NCBI Taxonomy" id="3353"/>
    <lineage>
        <taxon>Eukaryota</taxon>
        <taxon>Viridiplantae</taxon>
        <taxon>Streptophyta</taxon>
        <taxon>Embryophyta</taxon>
        <taxon>Tracheophyta</taxon>
        <taxon>Spermatophyta</taxon>
        <taxon>Pinopsida</taxon>
        <taxon>Pinidae</taxon>
        <taxon>Conifers I</taxon>
        <taxon>Pinales</taxon>
        <taxon>Pinaceae</taxon>
        <taxon>Pinus</taxon>
        <taxon>Pinus subgen. Pinus</taxon>
    </lineage>
</organism>
<name>MPIM1_PINBN</name>
<keyword id="KW-0456">Lyase</keyword>
<keyword id="KW-0460">Magnesium</keyword>
<keyword id="KW-0479">Metal-binding</keyword>
<keyword id="KW-0611">Plant defense</keyword>
<evidence type="ECO:0000250" key="1">
    <source>
        <dbReference type="UniProtKB" id="Q40577"/>
    </source>
</evidence>
<evidence type="ECO:0000269" key="2">
    <source>
    </source>
</evidence>
<evidence type="ECO:0000303" key="3">
    <source>
    </source>
</evidence>
<evidence type="ECO:0000305" key="4"/>
<dbReference type="EC" id="4.2.3.147" evidence="2"/>
<dbReference type="EMBL" id="JQ240315">
    <property type="protein sequence ID" value="AFU73867.1"/>
    <property type="molecule type" value="mRNA"/>
</dbReference>
<dbReference type="SMR" id="M4HY08"/>
<dbReference type="KEGG" id="ag:AFU73867"/>
<dbReference type="BRENDA" id="4.2.3.147">
    <property type="organism ID" value="4842"/>
</dbReference>
<dbReference type="UniPathway" id="UPA00924"/>
<dbReference type="GO" id="GO:0000287">
    <property type="term" value="F:magnesium ion binding"/>
    <property type="evidence" value="ECO:0007669"/>
    <property type="project" value="InterPro"/>
</dbReference>
<dbReference type="GO" id="GO:0010333">
    <property type="term" value="F:terpene synthase activity"/>
    <property type="evidence" value="ECO:0007669"/>
    <property type="project" value="InterPro"/>
</dbReference>
<dbReference type="GO" id="GO:0006952">
    <property type="term" value="P:defense response"/>
    <property type="evidence" value="ECO:0007669"/>
    <property type="project" value="UniProtKB-KW"/>
</dbReference>
<dbReference type="GO" id="GO:0016102">
    <property type="term" value="P:diterpenoid biosynthetic process"/>
    <property type="evidence" value="ECO:0007669"/>
    <property type="project" value="InterPro"/>
</dbReference>
<dbReference type="CDD" id="cd00684">
    <property type="entry name" value="Terpene_cyclase_plant_C1"/>
    <property type="match status" value="1"/>
</dbReference>
<dbReference type="FunFam" id="1.50.10.130:FF:000002">
    <property type="entry name" value="Ent-copalyl diphosphate synthase, chloroplastic"/>
    <property type="match status" value="1"/>
</dbReference>
<dbReference type="FunFam" id="1.10.600.10:FF:000005">
    <property type="entry name" value="Ent-kaur-16-ene synthase, chloroplastic"/>
    <property type="match status" value="1"/>
</dbReference>
<dbReference type="Gene3D" id="1.50.10.160">
    <property type="match status" value="1"/>
</dbReference>
<dbReference type="Gene3D" id="1.10.600.10">
    <property type="entry name" value="Farnesyl Diphosphate Synthase"/>
    <property type="match status" value="1"/>
</dbReference>
<dbReference type="Gene3D" id="1.50.10.130">
    <property type="entry name" value="Terpene synthase, N-terminal domain"/>
    <property type="match status" value="1"/>
</dbReference>
<dbReference type="InterPro" id="IPR008949">
    <property type="entry name" value="Isoprenoid_synthase_dom_sf"/>
</dbReference>
<dbReference type="InterPro" id="IPR034741">
    <property type="entry name" value="Terpene_cyclase-like_1_C"/>
</dbReference>
<dbReference type="InterPro" id="IPR044814">
    <property type="entry name" value="Terpene_cyclase_plant_C1"/>
</dbReference>
<dbReference type="InterPro" id="IPR001906">
    <property type="entry name" value="Terpene_synth_N"/>
</dbReference>
<dbReference type="InterPro" id="IPR036965">
    <property type="entry name" value="Terpene_synth_N_sf"/>
</dbReference>
<dbReference type="InterPro" id="IPR050148">
    <property type="entry name" value="Terpene_synthase-like"/>
</dbReference>
<dbReference type="InterPro" id="IPR005630">
    <property type="entry name" value="Terpene_synthase_metal-bd"/>
</dbReference>
<dbReference type="InterPro" id="IPR008930">
    <property type="entry name" value="Terpenoid_cyclase/PrenylTrfase"/>
</dbReference>
<dbReference type="PANTHER" id="PTHR31739:SF25">
    <property type="entry name" value="(E,E)-GERANYLLINALOOL SYNTHASE"/>
    <property type="match status" value="1"/>
</dbReference>
<dbReference type="PANTHER" id="PTHR31739">
    <property type="entry name" value="ENT-COPALYL DIPHOSPHATE SYNTHASE, CHLOROPLASTIC"/>
    <property type="match status" value="1"/>
</dbReference>
<dbReference type="Pfam" id="PF01397">
    <property type="entry name" value="Terpene_synth"/>
    <property type="match status" value="1"/>
</dbReference>
<dbReference type="Pfam" id="PF03936">
    <property type="entry name" value="Terpene_synth_C"/>
    <property type="match status" value="1"/>
</dbReference>
<dbReference type="SFLD" id="SFLDS00005">
    <property type="entry name" value="Isoprenoid_Synthase_Type_I"/>
    <property type="match status" value="1"/>
</dbReference>
<dbReference type="SFLD" id="SFLDG01019">
    <property type="entry name" value="Terpene_Cyclase_Like_1_C_Termi"/>
    <property type="match status" value="1"/>
</dbReference>
<dbReference type="SFLD" id="SFLDG01014">
    <property type="entry name" value="Terpene_Cyclase_Like_1_N-term"/>
    <property type="match status" value="1"/>
</dbReference>
<dbReference type="SUPFAM" id="SSF48239">
    <property type="entry name" value="Terpenoid cyclases/Protein prenyltransferases"/>
    <property type="match status" value="2"/>
</dbReference>
<dbReference type="SUPFAM" id="SSF48576">
    <property type="entry name" value="Terpenoid synthases"/>
    <property type="match status" value="1"/>
</dbReference>
<gene>
    <name evidence="3" type="primary">TPS-mPim1</name>
</gene>
<comment type="function">
    <text evidence="2">Involved in defensive oleoresin formation in conifers in response to insect attack or other injury. Involved in diterpene (C20) olefins biosynthesis. Monofunctional enzyme lacking the DXDD motif in the class II active site relevant for the cyclization of geranylgeranyl diphosphate (GGPP). Requires (+)-copalyl diphosphate ((+)-CPP) as substrate, but no activity with GGPP or ent-CPP. Pimaradiene is the major products of the enzyme.</text>
</comment>
<comment type="catalytic activity">
    <reaction evidence="2">
        <text>(+)-copalyl diphosphate = (-)-pimara-8(14),15-diene + diphosphate</text>
        <dbReference type="Rhea" id="RHEA:42984"/>
        <dbReference type="ChEBI" id="CHEBI:8210"/>
        <dbReference type="ChEBI" id="CHEBI:33019"/>
        <dbReference type="ChEBI" id="CHEBI:58635"/>
        <dbReference type="EC" id="4.2.3.147"/>
    </reaction>
</comment>
<comment type="cofactor">
    <cofactor evidence="1">
        <name>Mg(2+)</name>
        <dbReference type="ChEBI" id="CHEBI:18420"/>
    </cofactor>
    <text evidence="1">Binds 3 Mg(2+) ions per subunit.</text>
</comment>
<comment type="pathway">
    <text evidence="4">Terpene metabolism; oleoresin biosynthesis.</text>
</comment>
<comment type="miscellaneous">
    <text evidence="4">The Asp-Asp-Xaa-Xaa-Asp/Glu (DDXXD/E) motif important for the catalytic activity in the class I active site is degenetated, but the Mg(2+) binding sites are conserved.</text>
</comment>
<comment type="similarity">
    <text evidence="4">Belongs to the terpene synthase family. Tpsd subfamily.</text>
</comment>